<feature type="chain" id="PRO_0000201364" description="UTP--glucose-1-phosphate uridylyltransferase">
    <location>
        <begin position="1"/>
        <end position="292"/>
    </location>
</feature>
<reference key="1">
    <citation type="journal article" date="1993" name="J. Bacteriol.">
        <title>Bacillus subtilis gtaB encodes UDP-glucose pyrophosphorylase and is controlled by stationary-phase transcription factor sigma B.</title>
        <authorList>
            <person name="Varon D."/>
            <person name="Boylan S.A."/>
            <person name="Okamoto K."/>
            <person name="Price C.W."/>
        </authorList>
    </citation>
    <scope>NUCLEOTIDE SEQUENCE [GENOMIC DNA]</scope>
    <scope>INDUCTION</scope>
    <scope>ROLE IN GLYCOSYLATION OF WTAS</scope>
    <source>
        <strain>168</strain>
    </source>
</reference>
<reference key="2">
    <citation type="journal article" date="1993" name="J. Gen. Microbiol.">
        <title>Sequencing and analysis of the divergon comprising gtaB, the structural gene of UDP-glucose pyrophosphorylase of Bacillus subtilis 168.</title>
        <authorList>
            <person name="Soldo B."/>
            <person name="Lazarevic V."/>
            <person name="Margot P."/>
            <person name="Karamata D."/>
        </authorList>
    </citation>
    <scope>NUCLEOTIDE SEQUENCE [GENOMIC DNA]</scope>
    <scope>FUNCTION</scope>
    <source>
        <strain>168</strain>
    </source>
</reference>
<reference key="3">
    <citation type="journal article" date="1997" name="Nature">
        <title>The complete genome sequence of the Gram-positive bacterium Bacillus subtilis.</title>
        <authorList>
            <person name="Kunst F."/>
            <person name="Ogasawara N."/>
            <person name="Moszer I."/>
            <person name="Albertini A.M."/>
            <person name="Alloni G."/>
            <person name="Azevedo V."/>
            <person name="Bertero M.G."/>
            <person name="Bessieres P."/>
            <person name="Bolotin A."/>
            <person name="Borchert S."/>
            <person name="Borriss R."/>
            <person name="Boursier L."/>
            <person name="Brans A."/>
            <person name="Braun M."/>
            <person name="Brignell S.C."/>
            <person name="Bron S."/>
            <person name="Brouillet S."/>
            <person name="Bruschi C.V."/>
            <person name="Caldwell B."/>
            <person name="Capuano V."/>
            <person name="Carter N.M."/>
            <person name="Choi S.-K."/>
            <person name="Codani J.-J."/>
            <person name="Connerton I.F."/>
            <person name="Cummings N.J."/>
            <person name="Daniel R.A."/>
            <person name="Denizot F."/>
            <person name="Devine K.M."/>
            <person name="Duesterhoeft A."/>
            <person name="Ehrlich S.D."/>
            <person name="Emmerson P.T."/>
            <person name="Entian K.-D."/>
            <person name="Errington J."/>
            <person name="Fabret C."/>
            <person name="Ferrari E."/>
            <person name="Foulger D."/>
            <person name="Fritz C."/>
            <person name="Fujita M."/>
            <person name="Fujita Y."/>
            <person name="Fuma S."/>
            <person name="Galizzi A."/>
            <person name="Galleron N."/>
            <person name="Ghim S.-Y."/>
            <person name="Glaser P."/>
            <person name="Goffeau A."/>
            <person name="Golightly E.J."/>
            <person name="Grandi G."/>
            <person name="Guiseppi G."/>
            <person name="Guy B.J."/>
            <person name="Haga K."/>
            <person name="Haiech J."/>
            <person name="Harwood C.R."/>
            <person name="Henaut A."/>
            <person name="Hilbert H."/>
            <person name="Holsappel S."/>
            <person name="Hosono S."/>
            <person name="Hullo M.-F."/>
            <person name="Itaya M."/>
            <person name="Jones L.-M."/>
            <person name="Joris B."/>
            <person name="Karamata D."/>
            <person name="Kasahara Y."/>
            <person name="Klaerr-Blanchard M."/>
            <person name="Klein C."/>
            <person name="Kobayashi Y."/>
            <person name="Koetter P."/>
            <person name="Koningstein G."/>
            <person name="Krogh S."/>
            <person name="Kumano M."/>
            <person name="Kurita K."/>
            <person name="Lapidus A."/>
            <person name="Lardinois S."/>
            <person name="Lauber J."/>
            <person name="Lazarevic V."/>
            <person name="Lee S.-M."/>
            <person name="Levine A."/>
            <person name="Liu H."/>
            <person name="Masuda S."/>
            <person name="Mauel C."/>
            <person name="Medigue C."/>
            <person name="Medina N."/>
            <person name="Mellado R.P."/>
            <person name="Mizuno M."/>
            <person name="Moestl D."/>
            <person name="Nakai S."/>
            <person name="Noback M."/>
            <person name="Noone D."/>
            <person name="O'Reilly M."/>
            <person name="Ogawa K."/>
            <person name="Ogiwara A."/>
            <person name="Oudega B."/>
            <person name="Park S.-H."/>
            <person name="Parro V."/>
            <person name="Pohl T.M."/>
            <person name="Portetelle D."/>
            <person name="Porwollik S."/>
            <person name="Prescott A.M."/>
            <person name="Presecan E."/>
            <person name="Pujic P."/>
            <person name="Purnelle B."/>
            <person name="Rapoport G."/>
            <person name="Rey M."/>
            <person name="Reynolds S."/>
            <person name="Rieger M."/>
            <person name="Rivolta C."/>
            <person name="Rocha E."/>
            <person name="Roche B."/>
            <person name="Rose M."/>
            <person name="Sadaie Y."/>
            <person name="Sato T."/>
            <person name="Scanlan E."/>
            <person name="Schleich S."/>
            <person name="Schroeter R."/>
            <person name="Scoffone F."/>
            <person name="Sekiguchi J."/>
            <person name="Sekowska A."/>
            <person name="Seror S.J."/>
            <person name="Serror P."/>
            <person name="Shin B.-S."/>
            <person name="Soldo B."/>
            <person name="Sorokin A."/>
            <person name="Tacconi E."/>
            <person name="Takagi T."/>
            <person name="Takahashi H."/>
            <person name="Takemaru K."/>
            <person name="Takeuchi M."/>
            <person name="Tamakoshi A."/>
            <person name="Tanaka T."/>
            <person name="Terpstra P."/>
            <person name="Tognoni A."/>
            <person name="Tosato V."/>
            <person name="Uchiyama S."/>
            <person name="Vandenbol M."/>
            <person name="Vannier F."/>
            <person name="Vassarotti A."/>
            <person name="Viari A."/>
            <person name="Wambutt R."/>
            <person name="Wedler E."/>
            <person name="Wedler H."/>
            <person name="Weitzenegger T."/>
            <person name="Winters P."/>
            <person name="Wipat A."/>
            <person name="Yamamoto H."/>
            <person name="Yamane K."/>
            <person name="Yasumoto K."/>
            <person name="Yata K."/>
            <person name="Yoshida K."/>
            <person name="Yoshikawa H.-F."/>
            <person name="Zumstein E."/>
            <person name="Yoshikawa H."/>
            <person name="Danchin A."/>
        </authorList>
    </citation>
    <scope>NUCLEOTIDE SEQUENCE [LARGE SCALE GENOMIC DNA]</scope>
    <source>
        <strain>168</strain>
    </source>
</reference>
<reference key="4">
    <citation type="journal article" date="1997" name="Electrophoresis">
        <title>First steps from a two-dimensional protein index towards a response-regulation map for Bacillus subtilis.</title>
        <authorList>
            <person name="Antelmann H."/>
            <person name="Bernhardt J."/>
            <person name="Schmid R."/>
            <person name="Mach H."/>
            <person name="Voelker U."/>
            <person name="Hecker M."/>
        </authorList>
    </citation>
    <scope>PROTEIN SEQUENCE OF 1-21</scope>
    <source>
        <strain>168 / IS58</strain>
    </source>
</reference>
<reference key="5">
    <citation type="journal article" date="1987" name="J. Gen. Microbiol.">
        <title>The gtaB marker in Bacillus subtilis 168 is associated with a deficiency in UDPglucose pyrophosphorylase.</title>
        <authorList>
            <person name="Pooley H.M."/>
            <person name="Paschoud D."/>
            <person name="Karamata D."/>
        </authorList>
    </citation>
    <scope>FUNCTION</scope>
    <source>
        <strain>168</strain>
    </source>
</reference>
<reference key="6">
    <citation type="journal article" date="2005" name="Appl. Environ. Microbiol.">
        <title>Bacillus subtilis alpha-phosphoglucomutase is required for normal cell morphology and biofilm formation.</title>
        <authorList>
            <person name="Lazarevic V."/>
            <person name="Soldo B."/>
            <person name="Medico N."/>
            <person name="Pooley H.M."/>
            <person name="Bron S."/>
            <person name="Karamata D."/>
        </authorList>
    </citation>
    <scope>ROLE IN BIOFILM FORMATION</scope>
    <scope>PATHWAY</scope>
    <source>
        <strain>168</strain>
    </source>
</reference>
<reference key="7">
    <citation type="journal article" date="2013" name="Mol. Microbiol.">
        <title>Flotillins functionally organize the bacterial membrane.</title>
        <authorList>
            <person name="Bach J.N."/>
            <person name="Bramkamp M."/>
        </authorList>
    </citation>
    <scope>INTERACTION WITH FLOT</scope>
    <scope>SUBCELLULAR LOCATION</scope>
    <source>
        <strain>168</strain>
    </source>
</reference>
<reference key="8">
    <citation type="journal article" date="2021" name="J. Biol. Chem.">
        <title>Bacillus subtilis YngB contributes to wall teichoic acid glucosylation and glycolipid formation during anaerobic growth.</title>
        <authorList>
            <person name="Wu C.H."/>
            <person name="Rismondo J."/>
            <person name="Morgan R.M.L."/>
            <person name="Shen Y."/>
            <person name="Loessner M.J."/>
            <person name="Larrouy-Maumus G."/>
            <person name="Freemont P.S."/>
            <person name="Gruendling A."/>
        </authorList>
    </citation>
    <scope>CATALYTIC ACTIVITY</scope>
    <scope>BIOPHYSICOCHEMICAL PROPERTIES</scope>
    <scope>DISRUPTION PHENOTYPE</scope>
    <source>
        <strain>168</strain>
    </source>
</reference>
<gene>
    <name type="primary">gtaB</name>
    <name type="ordered locus">BSU35670</name>
</gene>
<dbReference type="EC" id="2.7.7.9" evidence="4"/>
<dbReference type="EMBL" id="L12272">
    <property type="protein sequence ID" value="AAA71967.1"/>
    <property type="molecule type" value="Unassigned_DNA"/>
</dbReference>
<dbReference type="EMBL" id="Z22516">
    <property type="protein sequence ID" value="CAA80241.1"/>
    <property type="molecule type" value="Genomic_DNA"/>
</dbReference>
<dbReference type="EMBL" id="AL009126">
    <property type="protein sequence ID" value="CAB15584.1"/>
    <property type="molecule type" value="Genomic_DNA"/>
</dbReference>
<dbReference type="PIR" id="A40650">
    <property type="entry name" value="A40650"/>
</dbReference>
<dbReference type="RefSeq" id="NP_391447.1">
    <property type="nucleotide sequence ID" value="NC_000964.3"/>
</dbReference>
<dbReference type="SMR" id="Q05852"/>
<dbReference type="FunCoup" id="Q05852">
    <property type="interactions" value="368"/>
</dbReference>
<dbReference type="IntAct" id="Q05852">
    <property type="interactions" value="1"/>
</dbReference>
<dbReference type="MINT" id="Q05852"/>
<dbReference type="STRING" id="224308.BSU35670"/>
<dbReference type="jPOST" id="Q05852"/>
<dbReference type="PaxDb" id="224308-BSU35670"/>
<dbReference type="EnsemblBacteria" id="CAB15584">
    <property type="protein sequence ID" value="CAB15584"/>
    <property type="gene ID" value="BSU_35670"/>
</dbReference>
<dbReference type="GeneID" id="936797"/>
<dbReference type="KEGG" id="bsu:BSU35670"/>
<dbReference type="PATRIC" id="fig|224308.179.peg.3858"/>
<dbReference type="eggNOG" id="COG1210">
    <property type="taxonomic scope" value="Bacteria"/>
</dbReference>
<dbReference type="InParanoid" id="Q05852"/>
<dbReference type="OrthoDB" id="9803871at2"/>
<dbReference type="PhylomeDB" id="Q05852"/>
<dbReference type="BioCyc" id="BSUB:BSU35670-MONOMER"/>
<dbReference type="BioCyc" id="MetaCyc:BSU35670-MONOMER"/>
<dbReference type="UniPathway" id="UPA00894"/>
<dbReference type="Proteomes" id="UP000001570">
    <property type="component" value="Chromosome"/>
</dbReference>
<dbReference type="GO" id="GO:0045121">
    <property type="term" value="C:membrane raft"/>
    <property type="evidence" value="ECO:0007669"/>
    <property type="project" value="UniProtKB-SubCell"/>
</dbReference>
<dbReference type="GO" id="GO:0005886">
    <property type="term" value="C:plasma membrane"/>
    <property type="evidence" value="ECO:0007669"/>
    <property type="project" value="UniProtKB-SubCell"/>
</dbReference>
<dbReference type="GO" id="GO:0003983">
    <property type="term" value="F:UTP:glucose-1-phosphate uridylyltransferase activity"/>
    <property type="evidence" value="ECO:0007669"/>
    <property type="project" value="UniProtKB-EC"/>
</dbReference>
<dbReference type="GO" id="GO:0009246">
    <property type="term" value="P:enterobacterial common antigen biosynthetic process"/>
    <property type="evidence" value="ECO:0007669"/>
    <property type="project" value="UniProtKB-UniPathway"/>
</dbReference>
<dbReference type="GO" id="GO:0006011">
    <property type="term" value="P:UDP-alpha-D-glucose metabolic process"/>
    <property type="evidence" value="ECO:0007669"/>
    <property type="project" value="InterPro"/>
</dbReference>
<dbReference type="CDD" id="cd02541">
    <property type="entry name" value="UGPase_prokaryotic"/>
    <property type="match status" value="1"/>
</dbReference>
<dbReference type="FunFam" id="3.90.550.10:FF:000045">
    <property type="entry name" value="UTP--glucose-1-phosphate uridylyltransferase"/>
    <property type="match status" value="1"/>
</dbReference>
<dbReference type="Gene3D" id="3.90.550.10">
    <property type="entry name" value="Spore Coat Polysaccharide Biosynthesis Protein SpsA, Chain A"/>
    <property type="match status" value="1"/>
</dbReference>
<dbReference type="InterPro" id="IPR005771">
    <property type="entry name" value="GalU_uridylyltTrfase_bac/arc"/>
</dbReference>
<dbReference type="InterPro" id="IPR005835">
    <property type="entry name" value="NTP_transferase_dom"/>
</dbReference>
<dbReference type="InterPro" id="IPR029044">
    <property type="entry name" value="Nucleotide-diphossugar_trans"/>
</dbReference>
<dbReference type="NCBIfam" id="TIGR01099">
    <property type="entry name" value="galU"/>
    <property type="match status" value="1"/>
</dbReference>
<dbReference type="PANTHER" id="PTHR43197">
    <property type="entry name" value="UTP--GLUCOSE-1-PHOSPHATE URIDYLYLTRANSFERASE"/>
    <property type="match status" value="1"/>
</dbReference>
<dbReference type="PANTHER" id="PTHR43197:SF1">
    <property type="entry name" value="UTP--GLUCOSE-1-PHOSPHATE URIDYLYLTRANSFERASE"/>
    <property type="match status" value="1"/>
</dbReference>
<dbReference type="Pfam" id="PF00483">
    <property type="entry name" value="NTP_transferase"/>
    <property type="match status" value="1"/>
</dbReference>
<dbReference type="SUPFAM" id="SSF53448">
    <property type="entry name" value="Nucleotide-diphospho-sugar transferases"/>
    <property type="match status" value="1"/>
</dbReference>
<proteinExistence type="evidence at protein level"/>
<comment type="function">
    <text evidence="1 3 5 6">Catalyzes the formation of UDP-glucose from glucose-1-phosphate and UTP. This is an intermediate step in the biosynthesis of diglucosyl-diacylglycerol (Glc2-DAG), i.e. the predominant glycolipid found in B.subtilis membrane, which is also used as a membrane anchor for lipoteichoic acid (LTA). Has a role in the biosynthesis of all phosphate-containing envelope polymers, since UDP-glucose serves as a glucosyl donor not only for the biosynthesis of LTA but also for wall teichoic acids (WTAs). Is required for biofilm formation. This is likely due to another role of UDP-glucose, which might also act as a metabolic signal regulating biofilm formation or may be involved in some unknown biosynthetic pathway essential for biofilm formation, e.g. the synthesis of an exopolysaccharide.</text>
</comment>
<comment type="catalytic activity">
    <reaction evidence="4">
        <text>alpha-D-glucose 1-phosphate + UTP + H(+) = UDP-alpha-D-glucose + diphosphate</text>
        <dbReference type="Rhea" id="RHEA:19889"/>
        <dbReference type="ChEBI" id="CHEBI:15378"/>
        <dbReference type="ChEBI" id="CHEBI:33019"/>
        <dbReference type="ChEBI" id="CHEBI:46398"/>
        <dbReference type="ChEBI" id="CHEBI:58601"/>
        <dbReference type="ChEBI" id="CHEBI:58885"/>
        <dbReference type="EC" id="2.7.7.9"/>
    </reaction>
</comment>
<comment type="biophysicochemical properties">
    <kinetics>
        <KM evidence="4">45.6 uM for glucose-1-phosphate</KM>
        <KM evidence="4">49.5 uM for UTP</KM>
        <text evidence="4">kcat is 1.06 sec(-1) with glucose-1-phosphate as substrate. kcat is 1.04 sec(-1) with UTP as substrate.</text>
    </kinetics>
</comment>
<comment type="pathway">
    <text evidence="1">Glycolipid metabolism; diglucosyl-diacylglycerol biosynthesis.</text>
</comment>
<comment type="subunit">
    <text evidence="2">Interacts with FloT.</text>
</comment>
<comment type="subcellular location">
    <subcellularLocation>
        <location evidence="2">Cell membrane</location>
        <topology evidence="8">Peripheral membrane protein</topology>
    </subcellularLocation>
    <subcellularLocation>
        <location evidence="2">Membrane raft</location>
        <topology>Peripheral membrane protein</topology>
    </subcellularLocation>
    <text evidence="2">Present in detergent-resistant membrane (DRM) fractions that may be equivalent to eukaryotic membrane rafts; these rafts include proteins involved in signaling, molecule trafficking and protein secretion.</text>
</comment>
<comment type="induction">
    <text evidence="6">By heat shock, salt stress, oxidative stress, glucose limitation and oxygen limitation. Expressed under control of the sigma-B transcription factor.</text>
</comment>
<comment type="disruption phenotype">
    <text evidence="4">Under aerobic growth condition, deletion mutants display morphological defects and the cells are curled and show some bulges (PubMed:33556370). No aberrant morphology is observed for the deletion mutants under anaerobic growth conditions (PubMed:33556370).</text>
</comment>
<comment type="miscellaneous">
    <text evidence="4">GtaB is the main UGPase enzyme producing UDP-glucose under both aerobic and anaerobic fermentative growth conditions (PubMed:33556370). YngB augments UDP-glucose production under anaerobic growth conditions (PubMed:33556370).</text>
</comment>
<comment type="similarity">
    <text evidence="8">Belongs to the UDPGP type 2 family.</text>
</comment>
<protein>
    <recommendedName>
        <fullName evidence="7">UTP--glucose-1-phosphate uridylyltransferase</fullName>
        <ecNumber evidence="4">2.7.7.9</ecNumber>
    </recommendedName>
    <alternativeName>
        <fullName>Alpha-D-glucosyl-1-phosphate uridylyltransferase</fullName>
    </alternativeName>
    <alternativeName>
        <fullName>General stress protein 33</fullName>
        <shortName>GSP33</shortName>
    </alternativeName>
    <alternativeName>
        <fullName>UDP-glucose pyrophosphorylase</fullName>
        <shortName>UDPGP</shortName>
        <shortName evidence="7">UGPase</shortName>
    </alternativeName>
    <alternativeName>
        <fullName>Uridine diphosphoglucose pyrophosphorylase</fullName>
    </alternativeName>
</protein>
<evidence type="ECO:0000269" key="1">
    <source>
    </source>
</evidence>
<evidence type="ECO:0000269" key="2">
    <source>
    </source>
</evidence>
<evidence type="ECO:0000269" key="3">
    <source>
    </source>
</evidence>
<evidence type="ECO:0000269" key="4">
    <source>
    </source>
</evidence>
<evidence type="ECO:0000269" key="5">
    <source>
    </source>
</evidence>
<evidence type="ECO:0000269" key="6">
    <source>
    </source>
</evidence>
<evidence type="ECO:0000303" key="7">
    <source>
    </source>
</evidence>
<evidence type="ECO:0000305" key="8"/>
<accession>Q05852</accession>
<organism>
    <name type="scientific">Bacillus subtilis (strain 168)</name>
    <dbReference type="NCBI Taxonomy" id="224308"/>
    <lineage>
        <taxon>Bacteria</taxon>
        <taxon>Bacillati</taxon>
        <taxon>Bacillota</taxon>
        <taxon>Bacilli</taxon>
        <taxon>Bacillales</taxon>
        <taxon>Bacillaceae</taxon>
        <taxon>Bacillus</taxon>
    </lineage>
</organism>
<sequence>MKKVRKAIIPAAGLGTRFLPATKAMPKEMLPIVDKPTIQYIIEEAVEAGIEDIIIVTGKSKRAIEDHFDYSPELERNLEEKGKTELLEKVKKASNLADIHYIRQKEPKGLGHAVWCARNFIGDEPFAVLLGDDIVQAETPGLRQLMDEYEKTLSSIIGVQQVPEEETHRYGIIDPLTSEGRRYQVKNFVEKPPKGTAPSNLAILGRYVFTPEIFMYLEEQQVGAGGEIQLTDAIQKLNEIQRVFAYDFEGKRYDVGEKLGFITTTLEFAMQDKELRDQLVPFMEGLLNKEEI</sequence>
<keyword id="KW-0119">Carbohydrate metabolism</keyword>
<keyword id="KW-1003">Cell membrane</keyword>
<keyword id="KW-0903">Direct protein sequencing</keyword>
<keyword id="KW-0472">Membrane</keyword>
<keyword id="KW-0548">Nucleotidyltransferase</keyword>
<keyword id="KW-1185">Reference proteome</keyword>
<keyword id="KW-0346">Stress response</keyword>
<keyword id="KW-0808">Transferase</keyword>
<name>GTAB_BACSU</name>